<feature type="signal peptide" evidence="1">
    <location>
        <begin position="1"/>
        <end position="26"/>
    </location>
</feature>
<feature type="chain" id="PRO_0000271538" description="Extracellular matrix protein-binding protein emp">
    <location>
        <begin position="27"/>
        <end position="340"/>
    </location>
</feature>
<name>EMP_STAAN</name>
<accession>Q7A6P4</accession>
<proteinExistence type="evidence at protein level"/>
<organism>
    <name type="scientific">Staphylococcus aureus (strain N315)</name>
    <dbReference type="NCBI Taxonomy" id="158879"/>
    <lineage>
        <taxon>Bacteria</taxon>
        <taxon>Bacillati</taxon>
        <taxon>Bacillota</taxon>
        <taxon>Bacilli</taxon>
        <taxon>Bacillales</taxon>
        <taxon>Staphylococcaceae</taxon>
        <taxon>Staphylococcus</taxon>
    </lineage>
</organism>
<reference key="1">
    <citation type="journal article" date="2001" name="Lancet">
        <title>Whole genome sequencing of meticillin-resistant Staphylococcus aureus.</title>
        <authorList>
            <person name="Kuroda M."/>
            <person name="Ohta T."/>
            <person name="Uchiyama I."/>
            <person name="Baba T."/>
            <person name="Yuzawa H."/>
            <person name="Kobayashi I."/>
            <person name="Cui L."/>
            <person name="Oguchi A."/>
            <person name="Aoki K."/>
            <person name="Nagai Y."/>
            <person name="Lian J.-Q."/>
            <person name="Ito T."/>
            <person name="Kanamori M."/>
            <person name="Matsumaru H."/>
            <person name="Maruyama A."/>
            <person name="Murakami H."/>
            <person name="Hosoyama A."/>
            <person name="Mizutani-Ui Y."/>
            <person name="Takahashi N.K."/>
            <person name="Sawano T."/>
            <person name="Inoue R."/>
            <person name="Kaito C."/>
            <person name="Sekimizu K."/>
            <person name="Hirakawa H."/>
            <person name="Kuhara S."/>
            <person name="Goto S."/>
            <person name="Yabuzaki J."/>
            <person name="Kanehisa M."/>
            <person name="Yamashita A."/>
            <person name="Oshima K."/>
            <person name="Furuya K."/>
            <person name="Yoshino C."/>
            <person name="Shiba T."/>
            <person name="Hattori M."/>
            <person name="Ogasawara N."/>
            <person name="Hayashi H."/>
            <person name="Hiramatsu K."/>
        </authorList>
    </citation>
    <scope>NUCLEOTIDE SEQUENCE [LARGE SCALE GENOMIC DNA]</scope>
    <source>
        <strain>N315</strain>
    </source>
</reference>
<reference key="2">
    <citation type="submission" date="2007-10" db="UniProtKB">
        <title>Shotgun proteomic analysis of total and membrane protein extracts of S. aureus strain N315.</title>
        <authorList>
            <person name="Vaezzadeh A.R."/>
            <person name="Deshusses J."/>
            <person name="Lescuyer P."/>
            <person name="Hochstrasser D.F."/>
        </authorList>
    </citation>
    <scope>IDENTIFICATION BY MASS SPECTROMETRY [LARGE SCALE ANALYSIS]</scope>
    <source>
        <strain>N315</strain>
    </source>
</reference>
<comment type="function">
    <text evidence="1">Adhesin that binds to the host cell extracellular matrix proteins fibronectin, fibrinogen, collagen, and vitronectin.</text>
</comment>
<comment type="subcellular location">
    <subcellularLocation>
        <location evidence="1">Cell surface</location>
    </subcellularLocation>
</comment>
<keyword id="KW-0732">Signal</keyword>
<gene>
    <name type="primary">emp</name>
    <name type="ordered locus">SA0744</name>
</gene>
<sequence length="340" mass="38495">MKKKLLVLTMSTLFATQLINSNHAKASVTESVDKKFVVPESGINKIIPAYDEFKNSPKVNVSNLTDNKNFVVSEDKLNKIVDSSAASKIVDKNFAVPESKLGNIVPEYKEINNRVNVATNNPASQQVDKHFVAKGPEVNRFITQNKVNHHFITTQTHYKKVITSYKSTHVHKHVNHAKDSINKHFIVKPSESPRYTHPSQSLIIKHHFAVPGYHAHKFVTPGHASIKINHFCVVPQINSFKVIPPYGHNSHRMHVPSFQNNTTATHQNAKVNKAYDYKYFYSYKVVKGVKKYFSFSQSNGYKIGKPSLNIKNVNYQYAVPSYSPTHYVPEFKGSLPAPRV</sequence>
<protein>
    <recommendedName>
        <fullName>Extracellular matrix protein-binding protein emp</fullName>
    </recommendedName>
</protein>
<dbReference type="EMBL" id="BA000018">
    <property type="protein sequence ID" value="BAB41977.1"/>
    <property type="molecule type" value="Genomic_DNA"/>
</dbReference>
<dbReference type="PIR" id="F89852">
    <property type="entry name" value="F89852"/>
</dbReference>
<dbReference type="RefSeq" id="WP_000728068.1">
    <property type="nucleotide sequence ID" value="NC_002745.2"/>
</dbReference>
<dbReference type="EnsemblBacteria" id="BAB41977">
    <property type="protein sequence ID" value="BAB41977"/>
    <property type="gene ID" value="BAB41977"/>
</dbReference>
<dbReference type="KEGG" id="sau:SA0744"/>
<dbReference type="HOGENOM" id="CLU_078520_0_0_9"/>
<dbReference type="GO" id="GO:0009986">
    <property type="term" value="C:cell surface"/>
    <property type="evidence" value="ECO:0007669"/>
    <property type="project" value="UniProtKB-SubCell"/>
</dbReference>
<evidence type="ECO:0000250" key="1"/>